<proteinExistence type="inferred from homology"/>
<gene>
    <name evidence="1" type="primary">yfeO</name>
    <name type="ordered locus">ECED1_2836</name>
</gene>
<reference key="1">
    <citation type="journal article" date="2009" name="PLoS Genet.">
        <title>Organised genome dynamics in the Escherichia coli species results in highly diverse adaptive paths.</title>
        <authorList>
            <person name="Touchon M."/>
            <person name="Hoede C."/>
            <person name="Tenaillon O."/>
            <person name="Barbe V."/>
            <person name="Baeriswyl S."/>
            <person name="Bidet P."/>
            <person name="Bingen E."/>
            <person name="Bonacorsi S."/>
            <person name="Bouchier C."/>
            <person name="Bouvet O."/>
            <person name="Calteau A."/>
            <person name="Chiapello H."/>
            <person name="Clermont O."/>
            <person name="Cruveiller S."/>
            <person name="Danchin A."/>
            <person name="Diard M."/>
            <person name="Dossat C."/>
            <person name="Karoui M.E."/>
            <person name="Frapy E."/>
            <person name="Garry L."/>
            <person name="Ghigo J.M."/>
            <person name="Gilles A.M."/>
            <person name="Johnson J."/>
            <person name="Le Bouguenec C."/>
            <person name="Lescat M."/>
            <person name="Mangenot S."/>
            <person name="Martinez-Jehanne V."/>
            <person name="Matic I."/>
            <person name="Nassif X."/>
            <person name="Oztas S."/>
            <person name="Petit M.A."/>
            <person name="Pichon C."/>
            <person name="Rouy Z."/>
            <person name="Ruf C.S."/>
            <person name="Schneider D."/>
            <person name="Tourret J."/>
            <person name="Vacherie B."/>
            <person name="Vallenet D."/>
            <person name="Medigue C."/>
            <person name="Rocha E.P.C."/>
            <person name="Denamur E."/>
        </authorList>
    </citation>
    <scope>NUCLEOTIDE SEQUENCE [LARGE SCALE GENOMIC DNA]</scope>
    <source>
        <strain>ED1a</strain>
    </source>
</reference>
<feature type="chain" id="PRO_1000164035" description="Putative ion-transport protein YfeO">
    <location>
        <begin position="1"/>
        <end position="418"/>
    </location>
</feature>
<feature type="transmembrane region" description="Helical" evidence="1">
    <location>
        <begin position="10"/>
        <end position="30"/>
    </location>
</feature>
<feature type="transmembrane region" description="Helical" evidence="1">
    <location>
        <begin position="54"/>
        <end position="74"/>
    </location>
</feature>
<feature type="transmembrane region" description="Helical" evidence="1">
    <location>
        <begin position="99"/>
        <end position="119"/>
    </location>
</feature>
<feature type="transmembrane region" description="Helical" evidence="1">
    <location>
        <begin position="120"/>
        <end position="140"/>
    </location>
</feature>
<feature type="transmembrane region" description="Helical" evidence="1">
    <location>
        <begin position="149"/>
        <end position="169"/>
    </location>
</feature>
<feature type="transmembrane region" description="Helical" evidence="1">
    <location>
        <begin position="186"/>
        <end position="206"/>
    </location>
</feature>
<feature type="transmembrane region" description="Helical" evidence="1">
    <location>
        <begin position="223"/>
        <end position="243"/>
    </location>
</feature>
<feature type="transmembrane region" description="Helical" evidence="1">
    <location>
        <begin position="258"/>
        <end position="278"/>
    </location>
</feature>
<feature type="transmembrane region" description="Helical" evidence="1">
    <location>
        <begin position="300"/>
        <end position="320"/>
    </location>
</feature>
<feature type="transmembrane region" description="Helical" evidence="1">
    <location>
        <begin position="322"/>
        <end position="342"/>
    </location>
</feature>
<feature type="transmembrane region" description="Helical" evidence="1">
    <location>
        <begin position="343"/>
        <end position="363"/>
    </location>
</feature>
<feature type="transmembrane region" description="Helical" evidence="1">
    <location>
        <begin position="371"/>
        <end position="391"/>
    </location>
</feature>
<organism>
    <name type="scientific">Escherichia coli O81 (strain ED1a)</name>
    <dbReference type="NCBI Taxonomy" id="585397"/>
    <lineage>
        <taxon>Bacteria</taxon>
        <taxon>Pseudomonadati</taxon>
        <taxon>Pseudomonadota</taxon>
        <taxon>Gammaproteobacteria</taxon>
        <taxon>Enterobacterales</taxon>
        <taxon>Enterobacteriaceae</taxon>
        <taxon>Escherichia</taxon>
    </lineage>
</organism>
<keyword id="KW-1003">Cell membrane</keyword>
<keyword id="KW-0407">Ion channel</keyword>
<keyword id="KW-0406">Ion transport</keyword>
<keyword id="KW-0472">Membrane</keyword>
<keyword id="KW-0812">Transmembrane</keyword>
<keyword id="KW-1133">Transmembrane helix</keyword>
<keyword id="KW-0813">Transport</keyword>
<sequence>MLHPRARTMLLLSLPAVAIGIASSLILIMVMKIASVLQNLLWQRLPGTLGIAQDSPLWIIGVLTLTGIAVGLVIRFSQGHAGPDPACEPLIGAPVPPSALPGLIVALILGLAGGVSLGPEHPIMTVNIALAVAIGARLLPRVNRMEWTILASAGTIGALFGTPVAAALIFSQTLNGSNEVPLWDRLFAPLMAAAAGALTTGLFFHPHFSLPIAHYGQMEMTDILSGAIVAAIAIAAGMVAVWCLPRLHAMMHQMKNPVFVLGIGGLILGILGVIGGPVSLFKGLDEMQQMVANQAFSTSDYFLLAVIKLAALVVAAASGFRGGRIFPAVFVGVALGLMLHEHVPAVPAAITVSCAILGIVLVVTRDGWLSLFMAAVVVPNTTLLPLLCIVMLPAWLLLAGKPMMMVNRQKQQPPHDNV</sequence>
<protein>
    <recommendedName>
        <fullName evidence="1">Putative ion-transport protein YfeO</fullName>
    </recommendedName>
</protein>
<accession>B7MXQ1</accession>
<dbReference type="EMBL" id="CU928162">
    <property type="protein sequence ID" value="CAR08867.1"/>
    <property type="molecule type" value="Genomic_DNA"/>
</dbReference>
<dbReference type="RefSeq" id="WP_000903099.1">
    <property type="nucleotide sequence ID" value="NC_011745.1"/>
</dbReference>
<dbReference type="SMR" id="B7MXQ1"/>
<dbReference type="KEGG" id="ecq:ECED1_2836"/>
<dbReference type="HOGENOM" id="CLU_053130_0_0_6"/>
<dbReference type="Proteomes" id="UP000000748">
    <property type="component" value="Chromosome"/>
</dbReference>
<dbReference type="GO" id="GO:0005886">
    <property type="term" value="C:plasma membrane"/>
    <property type="evidence" value="ECO:0007669"/>
    <property type="project" value="UniProtKB-SubCell"/>
</dbReference>
<dbReference type="GO" id="GO:0015108">
    <property type="term" value="F:chloride transmembrane transporter activity"/>
    <property type="evidence" value="ECO:0007669"/>
    <property type="project" value="InterPro"/>
</dbReference>
<dbReference type="GO" id="GO:0005216">
    <property type="term" value="F:monoatomic ion channel activity"/>
    <property type="evidence" value="ECO:0007669"/>
    <property type="project" value="UniProtKB-UniRule"/>
</dbReference>
<dbReference type="CDD" id="cd00400">
    <property type="entry name" value="Voltage_gated_ClC"/>
    <property type="match status" value="1"/>
</dbReference>
<dbReference type="FunFam" id="1.10.3080.10:FF:000007">
    <property type="entry name" value="Putative ion-transport protein YfeO"/>
    <property type="match status" value="1"/>
</dbReference>
<dbReference type="Gene3D" id="1.10.3080.10">
    <property type="entry name" value="Clc chloride channel"/>
    <property type="match status" value="1"/>
</dbReference>
<dbReference type="HAMAP" id="MF_01115">
    <property type="entry name" value="CLC_YfeO"/>
    <property type="match status" value="1"/>
</dbReference>
<dbReference type="InterPro" id="IPR022969">
    <property type="entry name" value="Chloride_channel_YfeO"/>
</dbReference>
<dbReference type="InterPro" id="IPR014743">
    <property type="entry name" value="Cl-channel_core"/>
</dbReference>
<dbReference type="InterPro" id="IPR001807">
    <property type="entry name" value="ClC"/>
</dbReference>
<dbReference type="InterPro" id="IPR050368">
    <property type="entry name" value="ClC-type_chloride_channel"/>
</dbReference>
<dbReference type="NCBIfam" id="NF002971">
    <property type="entry name" value="PRK03655.1"/>
    <property type="match status" value="1"/>
</dbReference>
<dbReference type="PANTHER" id="PTHR43427">
    <property type="entry name" value="CHLORIDE CHANNEL PROTEIN CLC-E"/>
    <property type="match status" value="1"/>
</dbReference>
<dbReference type="PANTHER" id="PTHR43427:SF9">
    <property type="entry name" value="ION-TRANSPORT PROTEIN YFEO-RELATED"/>
    <property type="match status" value="1"/>
</dbReference>
<dbReference type="Pfam" id="PF00654">
    <property type="entry name" value="Voltage_CLC"/>
    <property type="match status" value="1"/>
</dbReference>
<dbReference type="PRINTS" id="PR00762">
    <property type="entry name" value="CLCHANNEL"/>
</dbReference>
<dbReference type="SUPFAM" id="SSF81340">
    <property type="entry name" value="Clc chloride channel"/>
    <property type="match status" value="1"/>
</dbReference>
<comment type="subcellular location">
    <subcellularLocation>
        <location evidence="1">Cell membrane</location>
        <topology evidence="1">Multi-pass membrane protein</topology>
    </subcellularLocation>
</comment>
<comment type="similarity">
    <text evidence="1">Belongs to the chloride channel (TC 2.A.49) family.</text>
</comment>
<name>YFEO_ECO81</name>
<evidence type="ECO:0000255" key="1">
    <source>
        <dbReference type="HAMAP-Rule" id="MF_01115"/>
    </source>
</evidence>